<name>RR12_GOSBA</name>
<comment type="function">
    <text evidence="1">With S4 and S5 plays an important role in translational accuracy. Located at the interface of the 30S and 50S subunits (By similarity).</text>
</comment>
<comment type="subunit">
    <text evidence="1">Part of the 30S ribosomal subunit.</text>
</comment>
<comment type="subcellular location">
    <subcellularLocation>
        <location>Plastid</location>
        <location>Chloroplast</location>
    </subcellularLocation>
</comment>
<comment type="similarity">
    <text evidence="3">Belongs to the universal ribosomal protein uS12 family.</text>
</comment>
<proteinExistence type="inferred from homology"/>
<protein>
    <recommendedName>
        <fullName evidence="2">Small ribosomal subunit protein uS12cz/uS12cy</fullName>
    </recommendedName>
    <alternativeName>
        <fullName evidence="3">30S ribosomal protein S12, chloroplastic</fullName>
    </alternativeName>
</protein>
<organism>
    <name type="scientific">Gossypium barbadense</name>
    <name type="common">Sea Island cotton</name>
    <name type="synonym">Hibiscus barbadensis</name>
    <dbReference type="NCBI Taxonomy" id="3634"/>
    <lineage>
        <taxon>Eukaryota</taxon>
        <taxon>Viridiplantae</taxon>
        <taxon>Streptophyta</taxon>
        <taxon>Embryophyta</taxon>
        <taxon>Tracheophyta</taxon>
        <taxon>Spermatophyta</taxon>
        <taxon>Magnoliopsida</taxon>
        <taxon>eudicotyledons</taxon>
        <taxon>Gunneridae</taxon>
        <taxon>Pentapetalae</taxon>
        <taxon>rosids</taxon>
        <taxon>malvids</taxon>
        <taxon>Malvales</taxon>
        <taxon>Malvaceae</taxon>
        <taxon>Malvoideae</taxon>
        <taxon>Gossypium</taxon>
    </lineage>
</organism>
<accession>A0ZZ59</accession>
<geneLocation type="chloroplast"/>
<keyword id="KW-0150">Chloroplast</keyword>
<keyword id="KW-0934">Plastid</keyword>
<keyword id="KW-0687">Ribonucleoprotein</keyword>
<keyword id="KW-0689">Ribosomal protein</keyword>
<keyword id="KW-0694">RNA-binding</keyword>
<keyword id="KW-0699">rRNA-binding</keyword>
<feature type="chain" id="PRO_0000276611" description="Small ribosomal subunit protein uS12cz/uS12cy">
    <location>
        <begin position="1"/>
        <end position="123"/>
    </location>
</feature>
<reference key="1">
    <citation type="journal article" date="2006" name="Genes Genet. Syst.">
        <title>Complete nucleotide sequence of the cotton (Gossypium barbadense L.) chloroplast genome with a comparative analysis of sequences among 9 dicot plants.</title>
        <authorList>
            <person name="Ibrahim R.I.H."/>
            <person name="Azuma J."/>
            <person name="Sakamoto M."/>
        </authorList>
    </citation>
    <scope>NUCLEOTIDE SEQUENCE [LARGE SCALE GENOMIC DNA]</scope>
</reference>
<evidence type="ECO:0000250" key="1"/>
<evidence type="ECO:0000255" key="2">
    <source>
        <dbReference type="HAMAP-Rule" id="MF_00403"/>
    </source>
</evidence>
<evidence type="ECO:0000305" key="3"/>
<dbReference type="EMBL" id="AP009123">
    <property type="protein sequence ID" value="BAF41271.1"/>
    <property type="molecule type" value="Genomic_DNA"/>
</dbReference>
<dbReference type="EMBL" id="AP009123">
    <property type="protein sequence ID" value="BAF41293.1"/>
    <property type="molecule type" value="Genomic_DNA"/>
</dbReference>
<dbReference type="SMR" id="A0ZZ59"/>
<dbReference type="GO" id="GO:0009507">
    <property type="term" value="C:chloroplast"/>
    <property type="evidence" value="ECO:0007669"/>
    <property type="project" value="UniProtKB-SubCell"/>
</dbReference>
<dbReference type="GO" id="GO:0015935">
    <property type="term" value="C:small ribosomal subunit"/>
    <property type="evidence" value="ECO:0007669"/>
    <property type="project" value="InterPro"/>
</dbReference>
<dbReference type="GO" id="GO:0019843">
    <property type="term" value="F:rRNA binding"/>
    <property type="evidence" value="ECO:0007669"/>
    <property type="project" value="UniProtKB-UniRule"/>
</dbReference>
<dbReference type="GO" id="GO:0003735">
    <property type="term" value="F:structural constituent of ribosome"/>
    <property type="evidence" value="ECO:0007669"/>
    <property type="project" value="InterPro"/>
</dbReference>
<dbReference type="GO" id="GO:0006412">
    <property type="term" value="P:translation"/>
    <property type="evidence" value="ECO:0007669"/>
    <property type="project" value="UniProtKB-UniRule"/>
</dbReference>
<dbReference type="CDD" id="cd03368">
    <property type="entry name" value="Ribosomal_S12"/>
    <property type="match status" value="1"/>
</dbReference>
<dbReference type="FunFam" id="2.40.50.140:FF:000008">
    <property type="entry name" value="30S ribosomal protein S12, chloroplastic"/>
    <property type="match status" value="1"/>
</dbReference>
<dbReference type="Gene3D" id="2.40.50.140">
    <property type="entry name" value="Nucleic acid-binding proteins"/>
    <property type="match status" value="1"/>
</dbReference>
<dbReference type="HAMAP" id="MF_00403_B">
    <property type="entry name" value="Ribosomal_uS12_B"/>
    <property type="match status" value="1"/>
</dbReference>
<dbReference type="InterPro" id="IPR012340">
    <property type="entry name" value="NA-bd_OB-fold"/>
</dbReference>
<dbReference type="InterPro" id="IPR006032">
    <property type="entry name" value="Ribosomal_uS12"/>
</dbReference>
<dbReference type="InterPro" id="IPR005679">
    <property type="entry name" value="Ribosomal_uS12_bac"/>
</dbReference>
<dbReference type="NCBIfam" id="TIGR00981">
    <property type="entry name" value="rpsL_bact"/>
    <property type="match status" value="1"/>
</dbReference>
<dbReference type="PANTHER" id="PTHR11652">
    <property type="entry name" value="30S RIBOSOMAL PROTEIN S12 FAMILY MEMBER"/>
    <property type="match status" value="1"/>
</dbReference>
<dbReference type="Pfam" id="PF00164">
    <property type="entry name" value="Ribosom_S12_S23"/>
    <property type="match status" value="1"/>
</dbReference>
<dbReference type="PIRSF" id="PIRSF002133">
    <property type="entry name" value="Ribosomal_S12/S23"/>
    <property type="match status" value="1"/>
</dbReference>
<dbReference type="PRINTS" id="PR01034">
    <property type="entry name" value="RIBOSOMALS12"/>
</dbReference>
<dbReference type="SUPFAM" id="SSF50249">
    <property type="entry name" value="Nucleic acid-binding proteins"/>
    <property type="match status" value="1"/>
</dbReference>
<dbReference type="PROSITE" id="PS00055">
    <property type="entry name" value="RIBOSOMAL_S12"/>
    <property type="match status" value="1"/>
</dbReference>
<gene>
    <name type="primary">rps12-A</name>
</gene>
<gene>
    <name type="primary">rps12-B</name>
</gene>
<sequence>MPTIKQLIRNARQLIRNVTKSPTLGGCPQRRGTCTRVYTITPKKPNSALRKVARVRLTSGFEITAYIPGIGHNSQEHSVVLVRGGRVKDLPGVRYHIVRGTLDAVGVKDRQQGRSKYGVKKPK</sequence>